<protein>
    <recommendedName>
        <fullName evidence="3">Beta-toxin Am IT</fullName>
        <shortName evidence="3">Am IT</shortName>
    </recommendedName>
</protein>
<feature type="chain" id="PRO_0000446449" description="Beta-toxin Am IT" evidence="2">
    <location>
        <begin position="1"/>
        <end position="65"/>
    </location>
</feature>
<feature type="domain" description="LCN-type CS-alpha/beta" evidence="1">
    <location>
        <begin position="1"/>
        <end position="64"/>
    </location>
</feature>
<feature type="modified residue" description="Pyrrolidone carboxylic acid (Glu); partial" evidence="2">
    <location>
        <position position="1"/>
    </location>
</feature>
<feature type="modified residue" description="Serine amide" evidence="2">
    <location>
        <position position="65"/>
    </location>
</feature>
<feature type="disulfide bond" evidence="1">
    <location>
        <begin position="12"/>
        <end position="63"/>
    </location>
</feature>
<feature type="disulfide bond" evidence="1">
    <location>
        <begin position="16"/>
        <end position="38"/>
    </location>
</feature>
<feature type="disulfide bond" evidence="1">
    <location>
        <begin position="23"/>
        <end position="45"/>
    </location>
</feature>
<feature type="disulfide bond" evidence="1">
    <location>
        <begin position="27"/>
        <end position="47"/>
    </location>
</feature>
<name>SCXIT_ANDMA</name>
<evidence type="ECO:0000255" key="1">
    <source>
        <dbReference type="PROSITE-ProRule" id="PRU01210"/>
    </source>
</evidence>
<evidence type="ECO:0000269" key="2">
    <source>
    </source>
</evidence>
<evidence type="ECO:0000303" key="3">
    <source>
    </source>
</evidence>
<evidence type="ECO:0000305" key="4"/>
<evidence type="ECO:0000305" key="5">
    <source>
    </source>
</evidence>
<sequence length="65" mass="7699">EHGYLLDKYTGCKVWCVINNESCNGECNKRRGGYYGYCYFWKLACYCQGARKSELWNYKTNKCKS</sequence>
<accession>P0DPT3</accession>
<proteinExistence type="evidence at protein level"/>
<comment type="function">
    <text evidence="2">Has a toxic effect on insects and mammals. On German cockroach larvae, it provokes contraction, paralysis and lethality (PubMed:26109302). Intracerebroventricular injection into mice causes severe neurotoxic symptoms (PubMed:26109302). It fully competes with the binding of the iodinated Css4 (AC P60266) on rat brain synaptosomes, with moderate affinity and in a concentration-dependent manner (EC(50)=25 nM). It may act on both site 3 and site 4 of voltage-gated sodium channels.</text>
</comment>
<comment type="subcellular location">
    <subcellularLocation>
        <location evidence="2">Secreted</location>
    </subcellularLocation>
</comment>
<comment type="tissue specificity">
    <text evidence="5">Expressed by the venom gland.</text>
</comment>
<comment type="domain">
    <text evidence="4">Has the structural arrangement of an alpha-helix connected to antiparallel beta-sheets by disulfide bonds (CS-alpha/beta).</text>
</comment>
<comment type="mass spectrometry" mass="7831.8" method="MALDI" evidence="2"/>
<comment type="mass spectrometry" mass="7803.8" method="MALDI" evidence="2">
    <text>with pyrrolidone carboxylic acid (Glu).</text>
</comment>
<comment type="toxic dose">
    <text evidence="2">LD(50) is 80 ng/100 mg of body weight cockroach larvae (B.germanica).</text>
</comment>
<comment type="miscellaneous">
    <text evidence="2">Negative results: does not inhibit the binding of iodinated Css2 (AC P08900) and iodinated Ts1 (AC P15226) to their specific antibodies.</text>
</comment>
<comment type="similarity">
    <text evidence="4">Belongs to the long (4 C-C) scorpion toxin superfamily. Sodium channel inhibitor family.</text>
</comment>
<organism>
    <name type="scientific">Androctonus mauritanicus mauritanicus</name>
    <name type="common">Scorpion</name>
    <dbReference type="NCBI Taxonomy" id="6860"/>
    <lineage>
        <taxon>Eukaryota</taxon>
        <taxon>Metazoa</taxon>
        <taxon>Ecdysozoa</taxon>
        <taxon>Arthropoda</taxon>
        <taxon>Chelicerata</taxon>
        <taxon>Arachnida</taxon>
        <taxon>Scorpiones</taxon>
        <taxon>Buthida</taxon>
        <taxon>Buthoidea</taxon>
        <taxon>Buthidae</taxon>
        <taxon>Androctonus</taxon>
    </lineage>
</organism>
<reference key="1">
    <citation type="journal article" date="2015" name="Sheng Li Xue Bao">
        <title>Characterization of Am IT, an anti-insect beta-toxin isolated from the venom of scorpion Androctonus mauretanicus.</title>
        <authorList>
            <person name="Oukkache N."/>
            <person name="ElJaoudi R."/>
            <person name="Chgoury F."/>
            <person name="Rocha M.T."/>
            <person name="Sabatier J.M."/>
        </authorList>
    </citation>
    <scope>PROTEIN SEQUENCE</scope>
    <scope>FUNCTION</scope>
    <scope>SUBCELLULAR LOCATION</scope>
    <scope>TOXIC DOSE</scope>
    <scope>PYROGLUTAMATE FORMATION AT GLU-1</scope>
    <scope>AMIDATION AT SER-65</scope>
    <scope>MASS SPECTROMETRY</scope>
    <source>
        <tissue>Venom</tissue>
    </source>
</reference>
<keyword id="KW-0027">Amidation</keyword>
<keyword id="KW-0903">Direct protein sequencing</keyword>
<keyword id="KW-1015">Disulfide bond</keyword>
<keyword id="KW-0872">Ion channel impairing toxin</keyword>
<keyword id="KW-0528">Neurotoxin</keyword>
<keyword id="KW-0873">Pyrrolidone carboxylic acid</keyword>
<keyword id="KW-0964">Secreted</keyword>
<keyword id="KW-0800">Toxin</keyword>
<keyword id="KW-0738">Voltage-gated sodium channel impairing toxin</keyword>
<dbReference type="SMR" id="P0DPT3"/>
<dbReference type="GO" id="GO:0005576">
    <property type="term" value="C:extracellular region"/>
    <property type="evidence" value="ECO:0007669"/>
    <property type="project" value="UniProtKB-SubCell"/>
</dbReference>
<dbReference type="GO" id="GO:0019871">
    <property type="term" value="F:sodium channel inhibitor activity"/>
    <property type="evidence" value="ECO:0007669"/>
    <property type="project" value="InterPro"/>
</dbReference>
<dbReference type="GO" id="GO:0090729">
    <property type="term" value="F:toxin activity"/>
    <property type="evidence" value="ECO:0007669"/>
    <property type="project" value="UniProtKB-KW"/>
</dbReference>
<dbReference type="GO" id="GO:0006952">
    <property type="term" value="P:defense response"/>
    <property type="evidence" value="ECO:0007669"/>
    <property type="project" value="InterPro"/>
</dbReference>
<dbReference type="CDD" id="cd23106">
    <property type="entry name" value="neurotoxins_LC_scorpion"/>
    <property type="match status" value="1"/>
</dbReference>
<dbReference type="Gene3D" id="3.30.30.10">
    <property type="entry name" value="Knottin, scorpion toxin-like"/>
    <property type="match status" value="1"/>
</dbReference>
<dbReference type="InterPro" id="IPR044062">
    <property type="entry name" value="LCN-type_CS_alpha_beta_dom"/>
</dbReference>
<dbReference type="InterPro" id="IPR003614">
    <property type="entry name" value="Scorpion_toxin-like"/>
</dbReference>
<dbReference type="InterPro" id="IPR036574">
    <property type="entry name" value="Scorpion_toxin-like_sf"/>
</dbReference>
<dbReference type="InterPro" id="IPR018218">
    <property type="entry name" value="Scorpion_toxinL"/>
</dbReference>
<dbReference type="InterPro" id="IPR002061">
    <property type="entry name" value="Scorpion_toxinL/defensin"/>
</dbReference>
<dbReference type="Pfam" id="PF00537">
    <property type="entry name" value="Toxin_3"/>
    <property type="match status" value="1"/>
</dbReference>
<dbReference type="PRINTS" id="PR00285">
    <property type="entry name" value="SCORPNTOXIN"/>
</dbReference>
<dbReference type="SMART" id="SM00505">
    <property type="entry name" value="Knot1"/>
    <property type="match status" value="1"/>
</dbReference>
<dbReference type="SUPFAM" id="SSF57095">
    <property type="entry name" value="Scorpion toxin-like"/>
    <property type="match status" value="1"/>
</dbReference>
<dbReference type="PROSITE" id="PS51863">
    <property type="entry name" value="LCN_CSAB"/>
    <property type="match status" value="1"/>
</dbReference>